<gene>
    <name evidence="1" type="primary">rpsD</name>
    <name type="ordered locus">Daro_0344</name>
</gene>
<name>RS4_DECAR</name>
<keyword id="KW-0687">Ribonucleoprotein</keyword>
<keyword id="KW-0689">Ribosomal protein</keyword>
<keyword id="KW-0694">RNA-binding</keyword>
<keyword id="KW-0699">rRNA-binding</keyword>
<reference key="1">
    <citation type="journal article" date="2009" name="BMC Genomics">
        <title>Metabolic analysis of the soil microbe Dechloromonas aromatica str. RCB: indications of a surprisingly complex life-style and cryptic anaerobic pathways for aromatic degradation.</title>
        <authorList>
            <person name="Salinero K.K."/>
            <person name="Keller K."/>
            <person name="Feil W.S."/>
            <person name="Feil H."/>
            <person name="Trong S."/>
            <person name="Di Bartolo G."/>
            <person name="Lapidus A."/>
        </authorList>
    </citation>
    <scope>NUCLEOTIDE SEQUENCE [LARGE SCALE GENOMIC DNA]</scope>
    <source>
        <strain>RCB</strain>
    </source>
</reference>
<protein>
    <recommendedName>
        <fullName evidence="1">Small ribosomal subunit protein uS4</fullName>
    </recommendedName>
    <alternativeName>
        <fullName evidence="2">30S ribosomal protein S4</fullName>
    </alternativeName>
</protein>
<accession>Q47J78</accession>
<dbReference type="EMBL" id="CP000089">
    <property type="protein sequence ID" value="AAZ45103.1"/>
    <property type="molecule type" value="Genomic_DNA"/>
</dbReference>
<dbReference type="SMR" id="Q47J78"/>
<dbReference type="STRING" id="159087.Daro_0344"/>
<dbReference type="KEGG" id="dar:Daro_0344"/>
<dbReference type="eggNOG" id="COG0522">
    <property type="taxonomic scope" value="Bacteria"/>
</dbReference>
<dbReference type="HOGENOM" id="CLU_092403_0_2_4"/>
<dbReference type="OrthoDB" id="9803672at2"/>
<dbReference type="GO" id="GO:0015935">
    <property type="term" value="C:small ribosomal subunit"/>
    <property type="evidence" value="ECO:0007669"/>
    <property type="project" value="InterPro"/>
</dbReference>
<dbReference type="GO" id="GO:0019843">
    <property type="term" value="F:rRNA binding"/>
    <property type="evidence" value="ECO:0007669"/>
    <property type="project" value="UniProtKB-UniRule"/>
</dbReference>
<dbReference type="GO" id="GO:0003735">
    <property type="term" value="F:structural constituent of ribosome"/>
    <property type="evidence" value="ECO:0007669"/>
    <property type="project" value="InterPro"/>
</dbReference>
<dbReference type="GO" id="GO:0042274">
    <property type="term" value="P:ribosomal small subunit biogenesis"/>
    <property type="evidence" value="ECO:0007669"/>
    <property type="project" value="TreeGrafter"/>
</dbReference>
<dbReference type="GO" id="GO:0006412">
    <property type="term" value="P:translation"/>
    <property type="evidence" value="ECO:0007669"/>
    <property type="project" value="UniProtKB-UniRule"/>
</dbReference>
<dbReference type="CDD" id="cd00165">
    <property type="entry name" value="S4"/>
    <property type="match status" value="1"/>
</dbReference>
<dbReference type="FunFam" id="1.10.1050.10:FF:000001">
    <property type="entry name" value="30S ribosomal protein S4"/>
    <property type="match status" value="1"/>
</dbReference>
<dbReference type="FunFam" id="3.10.290.10:FF:000001">
    <property type="entry name" value="30S ribosomal protein S4"/>
    <property type="match status" value="1"/>
</dbReference>
<dbReference type="Gene3D" id="1.10.1050.10">
    <property type="entry name" value="Ribosomal Protein S4 Delta 41, Chain A, domain 1"/>
    <property type="match status" value="1"/>
</dbReference>
<dbReference type="Gene3D" id="3.10.290.10">
    <property type="entry name" value="RNA-binding S4 domain"/>
    <property type="match status" value="1"/>
</dbReference>
<dbReference type="HAMAP" id="MF_01306_B">
    <property type="entry name" value="Ribosomal_uS4_B"/>
    <property type="match status" value="1"/>
</dbReference>
<dbReference type="InterPro" id="IPR022801">
    <property type="entry name" value="Ribosomal_uS4"/>
</dbReference>
<dbReference type="InterPro" id="IPR005709">
    <property type="entry name" value="Ribosomal_uS4_bac-type"/>
</dbReference>
<dbReference type="InterPro" id="IPR001912">
    <property type="entry name" value="Ribosomal_uS4_N"/>
</dbReference>
<dbReference type="InterPro" id="IPR002942">
    <property type="entry name" value="S4_RNA-bd"/>
</dbReference>
<dbReference type="InterPro" id="IPR036986">
    <property type="entry name" value="S4_RNA-bd_sf"/>
</dbReference>
<dbReference type="NCBIfam" id="NF003717">
    <property type="entry name" value="PRK05327.1"/>
    <property type="match status" value="1"/>
</dbReference>
<dbReference type="NCBIfam" id="TIGR01017">
    <property type="entry name" value="rpsD_bact"/>
    <property type="match status" value="1"/>
</dbReference>
<dbReference type="PANTHER" id="PTHR11831">
    <property type="entry name" value="30S 40S RIBOSOMAL PROTEIN"/>
    <property type="match status" value="1"/>
</dbReference>
<dbReference type="PANTHER" id="PTHR11831:SF4">
    <property type="entry name" value="SMALL RIBOSOMAL SUBUNIT PROTEIN US4M"/>
    <property type="match status" value="1"/>
</dbReference>
<dbReference type="Pfam" id="PF00163">
    <property type="entry name" value="Ribosomal_S4"/>
    <property type="match status" value="1"/>
</dbReference>
<dbReference type="Pfam" id="PF01479">
    <property type="entry name" value="S4"/>
    <property type="match status" value="1"/>
</dbReference>
<dbReference type="SMART" id="SM01390">
    <property type="entry name" value="Ribosomal_S4"/>
    <property type="match status" value="1"/>
</dbReference>
<dbReference type="SMART" id="SM00363">
    <property type="entry name" value="S4"/>
    <property type="match status" value="1"/>
</dbReference>
<dbReference type="SUPFAM" id="SSF55174">
    <property type="entry name" value="Alpha-L RNA-binding motif"/>
    <property type="match status" value="1"/>
</dbReference>
<dbReference type="PROSITE" id="PS50889">
    <property type="entry name" value="S4"/>
    <property type="match status" value="1"/>
</dbReference>
<organism>
    <name type="scientific">Dechloromonas aromatica (strain RCB)</name>
    <dbReference type="NCBI Taxonomy" id="159087"/>
    <lineage>
        <taxon>Bacteria</taxon>
        <taxon>Pseudomonadati</taxon>
        <taxon>Pseudomonadota</taxon>
        <taxon>Betaproteobacteria</taxon>
        <taxon>Rhodocyclales</taxon>
        <taxon>Azonexaceae</taxon>
        <taxon>Dechloromonas</taxon>
    </lineage>
</organism>
<feature type="chain" id="PRO_0000228891" description="Small ribosomal subunit protein uS4">
    <location>
        <begin position="1"/>
        <end position="209"/>
    </location>
</feature>
<feature type="domain" description="S4 RNA-binding" evidence="1">
    <location>
        <begin position="99"/>
        <end position="160"/>
    </location>
</feature>
<proteinExistence type="inferred from homology"/>
<sequence length="209" mass="23510">MARNLDPKCRQCRREGEKLFLKGEKCFTDKCAIERRSYAPGQHGQKSGARLSDYGVHLRAKQKIRRVYGVLEGQFRKTFAEADRRKGQTGENLLQLLEARLDSVAYRMGFGASRSESRQVVRHNGILVNGKRVNIPSFIVKPGDVVQLTDRARASLRCKAALEAAESRGFPEWISVDVKEGKGTFKAMPQRSELPATLNEGLVIELYSK</sequence>
<evidence type="ECO:0000255" key="1">
    <source>
        <dbReference type="HAMAP-Rule" id="MF_01306"/>
    </source>
</evidence>
<evidence type="ECO:0000305" key="2"/>
<comment type="function">
    <text evidence="1">One of the primary rRNA binding proteins, it binds directly to 16S rRNA where it nucleates assembly of the body of the 30S subunit.</text>
</comment>
<comment type="function">
    <text evidence="1">With S5 and S12 plays an important role in translational accuracy.</text>
</comment>
<comment type="subunit">
    <text evidence="1">Part of the 30S ribosomal subunit. Contacts protein S5. The interaction surface between S4 and S5 is involved in control of translational fidelity.</text>
</comment>
<comment type="similarity">
    <text evidence="1">Belongs to the universal ribosomal protein uS4 family.</text>
</comment>